<comment type="catalytic activity">
    <reaction evidence="1">
        <text>(S)-malate + a quinone = a quinol + oxaloacetate</text>
        <dbReference type="Rhea" id="RHEA:46012"/>
        <dbReference type="ChEBI" id="CHEBI:15589"/>
        <dbReference type="ChEBI" id="CHEBI:16452"/>
        <dbReference type="ChEBI" id="CHEBI:24646"/>
        <dbReference type="ChEBI" id="CHEBI:132124"/>
        <dbReference type="EC" id="1.1.5.4"/>
    </reaction>
</comment>
<comment type="cofactor">
    <cofactor evidence="1">
        <name>FAD</name>
        <dbReference type="ChEBI" id="CHEBI:57692"/>
    </cofactor>
</comment>
<comment type="pathway">
    <text evidence="1">Carbohydrate metabolism; tricarboxylic acid cycle; oxaloacetate from (S)-malate (quinone route): step 1/1.</text>
</comment>
<comment type="similarity">
    <text evidence="1">Belongs to the MQO family.</text>
</comment>
<keyword id="KW-0274">FAD</keyword>
<keyword id="KW-0285">Flavoprotein</keyword>
<keyword id="KW-0560">Oxidoreductase</keyword>
<keyword id="KW-0816">Tricarboxylic acid cycle</keyword>
<organism>
    <name type="scientific">Staphylococcus aureus (strain MSSA476)</name>
    <dbReference type="NCBI Taxonomy" id="282459"/>
    <lineage>
        <taxon>Bacteria</taxon>
        <taxon>Bacillati</taxon>
        <taxon>Bacillota</taxon>
        <taxon>Bacilli</taxon>
        <taxon>Bacillales</taxon>
        <taxon>Staphylococcaceae</taxon>
        <taxon>Staphylococcus</taxon>
    </lineage>
</organism>
<protein>
    <recommendedName>
        <fullName evidence="1">Probable malate:quinone oxidoreductase 2</fullName>
        <ecNumber evidence="1">1.1.5.4</ecNumber>
    </recommendedName>
    <alternativeName>
        <fullName evidence="1">MQO 2</fullName>
    </alternativeName>
    <alternativeName>
        <fullName evidence="1">Malate dehydrogenase [quinone] 2</fullName>
    </alternativeName>
</protein>
<dbReference type="EC" id="1.1.5.4" evidence="1"/>
<dbReference type="EMBL" id="BX571857">
    <property type="protein sequence ID" value="CAG44308.1"/>
    <property type="molecule type" value="Genomic_DNA"/>
</dbReference>
<dbReference type="SMR" id="Q6G669"/>
<dbReference type="KEGG" id="sas:SAS2492"/>
<dbReference type="HOGENOM" id="CLU_028151_0_0_9"/>
<dbReference type="UniPathway" id="UPA00223">
    <property type="reaction ID" value="UER01008"/>
</dbReference>
<dbReference type="GO" id="GO:0047545">
    <property type="term" value="F:2-hydroxyglutarate dehydrogenase activity"/>
    <property type="evidence" value="ECO:0007669"/>
    <property type="project" value="TreeGrafter"/>
</dbReference>
<dbReference type="GO" id="GO:0008924">
    <property type="term" value="F:L-malate dehydrogenase (quinone) activity"/>
    <property type="evidence" value="ECO:0007669"/>
    <property type="project" value="UniProtKB-UniRule"/>
</dbReference>
<dbReference type="GO" id="GO:0006099">
    <property type="term" value="P:tricarboxylic acid cycle"/>
    <property type="evidence" value="ECO:0007669"/>
    <property type="project" value="UniProtKB-UniRule"/>
</dbReference>
<dbReference type="Gene3D" id="3.30.9.10">
    <property type="entry name" value="D-Amino Acid Oxidase, subunit A, domain 2"/>
    <property type="match status" value="1"/>
</dbReference>
<dbReference type="Gene3D" id="3.50.50.60">
    <property type="entry name" value="FAD/NAD(P)-binding domain"/>
    <property type="match status" value="1"/>
</dbReference>
<dbReference type="HAMAP" id="MF_00212">
    <property type="entry name" value="MQO"/>
    <property type="match status" value="1"/>
</dbReference>
<dbReference type="InterPro" id="IPR036188">
    <property type="entry name" value="FAD/NAD-bd_sf"/>
</dbReference>
<dbReference type="InterPro" id="IPR006231">
    <property type="entry name" value="MQO"/>
</dbReference>
<dbReference type="NCBIfam" id="NF040844">
    <property type="entry name" value="Lac_Quin_Ox_NO"/>
    <property type="match status" value="1"/>
</dbReference>
<dbReference type="NCBIfam" id="TIGR01320">
    <property type="entry name" value="mal_quin_oxido"/>
    <property type="match status" value="1"/>
</dbReference>
<dbReference type="NCBIfam" id="NF003606">
    <property type="entry name" value="PRK05257.2-1"/>
    <property type="match status" value="1"/>
</dbReference>
<dbReference type="NCBIfam" id="NF003611">
    <property type="entry name" value="PRK05257.3-2"/>
    <property type="match status" value="1"/>
</dbReference>
<dbReference type="NCBIfam" id="NF009875">
    <property type="entry name" value="PRK13339.1"/>
    <property type="match status" value="1"/>
</dbReference>
<dbReference type="PANTHER" id="PTHR43104">
    <property type="entry name" value="L-2-HYDROXYGLUTARATE DEHYDROGENASE, MITOCHONDRIAL"/>
    <property type="match status" value="1"/>
</dbReference>
<dbReference type="PANTHER" id="PTHR43104:SF2">
    <property type="entry name" value="L-2-HYDROXYGLUTARATE DEHYDROGENASE, MITOCHONDRIAL"/>
    <property type="match status" value="1"/>
</dbReference>
<dbReference type="Pfam" id="PF06039">
    <property type="entry name" value="Mqo"/>
    <property type="match status" value="1"/>
</dbReference>
<dbReference type="SUPFAM" id="SSF51905">
    <property type="entry name" value="FAD/NAD(P)-binding domain"/>
    <property type="match status" value="1"/>
</dbReference>
<name>MQO2_STAAS</name>
<proteinExistence type="inferred from homology"/>
<accession>Q6G669</accession>
<feature type="chain" id="PRO_0000128746" description="Probable malate:quinone oxidoreductase 2">
    <location>
        <begin position="1"/>
        <end position="498"/>
    </location>
</feature>
<gene>
    <name evidence="1" type="primary">mqo</name>
    <name type="ordered locus">SAS2492</name>
</gene>
<evidence type="ECO:0000255" key="1">
    <source>
        <dbReference type="HAMAP-Rule" id="MF_00212"/>
    </source>
</evidence>
<reference key="1">
    <citation type="journal article" date="2004" name="Proc. Natl. Acad. Sci. U.S.A.">
        <title>Complete genomes of two clinical Staphylococcus aureus strains: evidence for the rapid evolution of virulence and drug resistance.</title>
        <authorList>
            <person name="Holden M.T.G."/>
            <person name="Feil E.J."/>
            <person name="Lindsay J.A."/>
            <person name="Peacock S.J."/>
            <person name="Day N.P.J."/>
            <person name="Enright M.C."/>
            <person name="Foster T.J."/>
            <person name="Moore C.E."/>
            <person name="Hurst L."/>
            <person name="Atkin R."/>
            <person name="Barron A."/>
            <person name="Bason N."/>
            <person name="Bentley S.D."/>
            <person name="Chillingworth C."/>
            <person name="Chillingworth T."/>
            <person name="Churcher C."/>
            <person name="Clark L."/>
            <person name="Corton C."/>
            <person name="Cronin A."/>
            <person name="Doggett J."/>
            <person name="Dowd L."/>
            <person name="Feltwell T."/>
            <person name="Hance Z."/>
            <person name="Harris B."/>
            <person name="Hauser H."/>
            <person name="Holroyd S."/>
            <person name="Jagels K."/>
            <person name="James K.D."/>
            <person name="Lennard N."/>
            <person name="Line A."/>
            <person name="Mayes R."/>
            <person name="Moule S."/>
            <person name="Mungall K."/>
            <person name="Ormond D."/>
            <person name="Quail M.A."/>
            <person name="Rabbinowitsch E."/>
            <person name="Rutherford K.M."/>
            <person name="Sanders M."/>
            <person name="Sharp S."/>
            <person name="Simmonds M."/>
            <person name="Stevens K."/>
            <person name="Whitehead S."/>
            <person name="Barrell B.G."/>
            <person name="Spratt B.G."/>
            <person name="Parkhill J."/>
        </authorList>
    </citation>
    <scope>NUCLEOTIDE SEQUENCE [LARGE SCALE GENOMIC DNA]</scope>
    <source>
        <strain>MSSA476</strain>
    </source>
</reference>
<sequence length="498" mass="55999">MAKSNSKDIVLIGAGVLSTTFGSMLKEIEPDWNIHVYERLDRPAIESSNERNNAGTGHAALCELNYTVLQPDGSIDIEKAKVINEEFEISKQFWGHLVKSGSIENPREFINPLPHISYVRGKNNVKFLKDRYEAMKAFPMFDNIEYTEDIEVMKKWIPLMMKGREDNPGIMAASKIDEGTDVNFGELTRKMAKSIEAHPNATVQFNHEVVDFEQLSNGQWEVTVKNRLTGEKFKQVTDYVFIGAGGGAIPLLQKTGIPESKHLGGFPISGQFLACTNPQVIEQHDAKVYGKEPPGTPPMTVPHLDTRYIDGQRTLLFGPFANVGPKFLKNGSNLDLFKSVKTYNITTLLAAAVKNLPLIKYSFDQVIMTKEGCMNHLRTFYPEARNEDWQLYTAGKRVQVIKDTPEHGKGFIQFGTEVVNSQDHTVIALLGESPGASTSVSVALEVLERNFPEYKTEWAPKIKKMIPSYGESLIEDEKLMRKIRKQTSKDLELGYYEN</sequence>